<reference key="1">
    <citation type="journal article" date="2002" name="Nature">
        <title>Genome sequence of the plant pathogen Ralstonia solanacearum.</title>
        <authorList>
            <person name="Salanoubat M."/>
            <person name="Genin S."/>
            <person name="Artiguenave F."/>
            <person name="Gouzy J."/>
            <person name="Mangenot S."/>
            <person name="Arlat M."/>
            <person name="Billault A."/>
            <person name="Brottier P."/>
            <person name="Camus J.-C."/>
            <person name="Cattolico L."/>
            <person name="Chandler M."/>
            <person name="Choisne N."/>
            <person name="Claudel-Renard C."/>
            <person name="Cunnac S."/>
            <person name="Demange N."/>
            <person name="Gaspin C."/>
            <person name="Lavie M."/>
            <person name="Moisan A."/>
            <person name="Robert C."/>
            <person name="Saurin W."/>
            <person name="Schiex T."/>
            <person name="Siguier P."/>
            <person name="Thebault P."/>
            <person name="Whalen M."/>
            <person name="Wincker P."/>
            <person name="Levy M."/>
            <person name="Weissenbach J."/>
            <person name="Boucher C.A."/>
        </authorList>
    </citation>
    <scope>NUCLEOTIDE SEQUENCE [LARGE SCALE GENOMIC DNA]</scope>
    <source>
        <strain>ATCC BAA-1114 / GMI1000</strain>
    </source>
</reference>
<dbReference type="EMBL" id="AL646052">
    <property type="protein sequence ID" value="CAD16697.1"/>
    <property type="molecule type" value="Genomic_DNA"/>
</dbReference>
<dbReference type="SMR" id="Q8XV43"/>
<dbReference type="STRING" id="267608.RSc2988"/>
<dbReference type="EnsemblBacteria" id="CAD16697">
    <property type="protein sequence ID" value="CAD16697"/>
    <property type="gene ID" value="RSc2988"/>
</dbReference>
<dbReference type="KEGG" id="rso:RSc2988"/>
<dbReference type="eggNOG" id="COG0218">
    <property type="taxonomic scope" value="Bacteria"/>
</dbReference>
<dbReference type="HOGENOM" id="CLU_033732_1_1_4"/>
<dbReference type="Proteomes" id="UP000001436">
    <property type="component" value="Chromosome"/>
</dbReference>
<dbReference type="GO" id="GO:0005829">
    <property type="term" value="C:cytosol"/>
    <property type="evidence" value="ECO:0007669"/>
    <property type="project" value="TreeGrafter"/>
</dbReference>
<dbReference type="GO" id="GO:0005525">
    <property type="term" value="F:GTP binding"/>
    <property type="evidence" value="ECO:0007669"/>
    <property type="project" value="UniProtKB-UniRule"/>
</dbReference>
<dbReference type="GO" id="GO:0046872">
    <property type="term" value="F:metal ion binding"/>
    <property type="evidence" value="ECO:0007669"/>
    <property type="project" value="UniProtKB-KW"/>
</dbReference>
<dbReference type="GO" id="GO:0000917">
    <property type="term" value="P:division septum assembly"/>
    <property type="evidence" value="ECO:0007669"/>
    <property type="project" value="UniProtKB-KW"/>
</dbReference>
<dbReference type="CDD" id="cd01876">
    <property type="entry name" value="YihA_EngB"/>
    <property type="match status" value="1"/>
</dbReference>
<dbReference type="FunFam" id="3.40.50.300:FF:000098">
    <property type="entry name" value="Probable GTP-binding protein EngB"/>
    <property type="match status" value="1"/>
</dbReference>
<dbReference type="Gene3D" id="3.40.50.300">
    <property type="entry name" value="P-loop containing nucleotide triphosphate hydrolases"/>
    <property type="match status" value="1"/>
</dbReference>
<dbReference type="HAMAP" id="MF_00321">
    <property type="entry name" value="GTPase_EngB"/>
    <property type="match status" value="1"/>
</dbReference>
<dbReference type="InterPro" id="IPR030393">
    <property type="entry name" value="G_ENGB_dom"/>
</dbReference>
<dbReference type="InterPro" id="IPR006073">
    <property type="entry name" value="GTP-bd"/>
</dbReference>
<dbReference type="InterPro" id="IPR019987">
    <property type="entry name" value="GTP-bd_ribosome_bio_YsxC"/>
</dbReference>
<dbReference type="InterPro" id="IPR027417">
    <property type="entry name" value="P-loop_NTPase"/>
</dbReference>
<dbReference type="NCBIfam" id="TIGR03598">
    <property type="entry name" value="GTPase_YsxC"/>
    <property type="match status" value="1"/>
</dbReference>
<dbReference type="PANTHER" id="PTHR11649:SF13">
    <property type="entry name" value="ENGB-TYPE G DOMAIN-CONTAINING PROTEIN"/>
    <property type="match status" value="1"/>
</dbReference>
<dbReference type="PANTHER" id="PTHR11649">
    <property type="entry name" value="MSS1/TRME-RELATED GTP-BINDING PROTEIN"/>
    <property type="match status" value="1"/>
</dbReference>
<dbReference type="Pfam" id="PF01926">
    <property type="entry name" value="MMR_HSR1"/>
    <property type="match status" value="1"/>
</dbReference>
<dbReference type="SUPFAM" id="SSF52540">
    <property type="entry name" value="P-loop containing nucleoside triphosphate hydrolases"/>
    <property type="match status" value="1"/>
</dbReference>
<dbReference type="PROSITE" id="PS51706">
    <property type="entry name" value="G_ENGB"/>
    <property type="match status" value="1"/>
</dbReference>
<proteinExistence type="inferred from homology"/>
<feature type="chain" id="PRO_0000157773" description="Probable GTP-binding protein EngB">
    <location>
        <begin position="1"/>
        <end position="234"/>
    </location>
</feature>
<feature type="domain" description="EngB-type G" evidence="1">
    <location>
        <begin position="23"/>
        <end position="209"/>
    </location>
</feature>
<feature type="region of interest" description="Disordered" evidence="2">
    <location>
        <begin position="210"/>
        <end position="234"/>
    </location>
</feature>
<feature type="binding site" evidence="1">
    <location>
        <begin position="31"/>
        <end position="38"/>
    </location>
    <ligand>
        <name>GTP</name>
        <dbReference type="ChEBI" id="CHEBI:37565"/>
    </ligand>
</feature>
<feature type="binding site" evidence="1">
    <location>
        <position position="38"/>
    </location>
    <ligand>
        <name>Mg(2+)</name>
        <dbReference type="ChEBI" id="CHEBI:18420"/>
    </ligand>
</feature>
<feature type="binding site" evidence="1">
    <location>
        <begin position="58"/>
        <end position="62"/>
    </location>
    <ligand>
        <name>GTP</name>
        <dbReference type="ChEBI" id="CHEBI:37565"/>
    </ligand>
</feature>
<feature type="binding site" evidence="1">
    <location>
        <position position="60"/>
    </location>
    <ligand>
        <name>Mg(2+)</name>
        <dbReference type="ChEBI" id="CHEBI:18420"/>
    </ligand>
</feature>
<feature type="binding site" evidence="1">
    <location>
        <begin position="82"/>
        <end position="85"/>
    </location>
    <ligand>
        <name>GTP</name>
        <dbReference type="ChEBI" id="CHEBI:37565"/>
    </ligand>
</feature>
<feature type="binding site" evidence="1">
    <location>
        <begin position="149"/>
        <end position="152"/>
    </location>
    <ligand>
        <name>GTP</name>
        <dbReference type="ChEBI" id="CHEBI:37565"/>
    </ligand>
</feature>
<feature type="binding site" evidence="1">
    <location>
        <begin position="187"/>
        <end position="190"/>
    </location>
    <ligand>
        <name>GTP</name>
        <dbReference type="ChEBI" id="CHEBI:37565"/>
    </ligand>
</feature>
<gene>
    <name evidence="1" type="primary">engB</name>
    <name type="ordered locus">RSc2988</name>
    <name type="ORF">RS01211</name>
</gene>
<organism>
    <name type="scientific">Ralstonia nicotianae (strain ATCC BAA-1114 / GMI1000)</name>
    <name type="common">Ralstonia solanacearum</name>
    <dbReference type="NCBI Taxonomy" id="267608"/>
    <lineage>
        <taxon>Bacteria</taxon>
        <taxon>Pseudomonadati</taxon>
        <taxon>Pseudomonadota</taxon>
        <taxon>Betaproteobacteria</taxon>
        <taxon>Burkholderiales</taxon>
        <taxon>Burkholderiaceae</taxon>
        <taxon>Ralstonia</taxon>
        <taxon>Ralstonia solanacearum species complex</taxon>
    </lineage>
</organism>
<sequence length="234" mass="25714">MSLLHQARFFTTVNHLRDLPATAVPEVAFAGRSNAGKSTAINVLCNQKRLAFSSKTPGRTQHINYFSVMPAKALDPLGFLVDLPGYGYAQVPGEAKSHWEHLLGDYIQTRSQLAGLVIMMDARRPFTDLDCQMVEWFLPTGKPIHVLLTKADKLTNNDASRALMSARKVLAGYQAQIEGEVSLTVQLFSSLKRRGIEEAQRTVAGWLCLPEAMPPSPDAEPAKKTPSPDAQRGE</sequence>
<keyword id="KW-0131">Cell cycle</keyword>
<keyword id="KW-0132">Cell division</keyword>
<keyword id="KW-0342">GTP-binding</keyword>
<keyword id="KW-0460">Magnesium</keyword>
<keyword id="KW-0479">Metal-binding</keyword>
<keyword id="KW-0547">Nucleotide-binding</keyword>
<keyword id="KW-1185">Reference proteome</keyword>
<keyword id="KW-0717">Septation</keyword>
<accession>Q8XV43</accession>
<protein>
    <recommendedName>
        <fullName evidence="1">Probable GTP-binding protein EngB</fullName>
    </recommendedName>
</protein>
<evidence type="ECO:0000255" key="1">
    <source>
        <dbReference type="HAMAP-Rule" id="MF_00321"/>
    </source>
</evidence>
<evidence type="ECO:0000256" key="2">
    <source>
        <dbReference type="SAM" id="MobiDB-lite"/>
    </source>
</evidence>
<name>ENGB_RALN1</name>
<comment type="function">
    <text evidence="1">Necessary for normal cell division and for the maintenance of normal septation.</text>
</comment>
<comment type="cofactor">
    <cofactor evidence="1">
        <name>Mg(2+)</name>
        <dbReference type="ChEBI" id="CHEBI:18420"/>
    </cofactor>
</comment>
<comment type="similarity">
    <text evidence="1">Belongs to the TRAFAC class TrmE-Era-EngA-EngB-Septin-like GTPase superfamily. EngB GTPase family.</text>
</comment>